<sequence>MNQEVIAKRYASALFQIALEQGQLDRIEEDVRAVRQALAENGEFLSLLSYPKLSLDQKKALIREAFAGVSTPVQNTLLLLLERHRFGLVPELAGTVSRPRSTTARGIAKAVAYSGAASTDEELRALSDVFAQKVGKQTLEIENIIDPELIGGVNVRIGNRIYDGSVSGQLERIRRQLIG</sequence>
<feature type="chain" id="PRO_0000193456" description="ATP synthase subunit delta">
    <location>
        <begin position="1"/>
        <end position="179"/>
    </location>
</feature>
<dbReference type="EMBL" id="X07804">
    <property type="protein sequence ID" value="CAA30651.1"/>
    <property type="molecule type" value="Genomic_DNA"/>
</dbReference>
<dbReference type="EMDB" id="EMD-9334"/>
<dbReference type="EMDB" id="EMD-9335"/>
<dbReference type="SMR" id="P09220"/>
<dbReference type="TCDB" id="3.A.2.1.14">
    <property type="family name" value="the h+- or na+-translocating f-type, v-type and a-type atpase (f-atpase) superfamily"/>
</dbReference>
<dbReference type="GO" id="GO:0005886">
    <property type="term" value="C:plasma membrane"/>
    <property type="evidence" value="ECO:0007669"/>
    <property type="project" value="UniProtKB-SubCell"/>
</dbReference>
<dbReference type="GO" id="GO:0045259">
    <property type="term" value="C:proton-transporting ATP synthase complex"/>
    <property type="evidence" value="ECO:0007669"/>
    <property type="project" value="UniProtKB-KW"/>
</dbReference>
<dbReference type="GO" id="GO:0046933">
    <property type="term" value="F:proton-transporting ATP synthase activity, rotational mechanism"/>
    <property type="evidence" value="ECO:0007669"/>
    <property type="project" value="UniProtKB-UniRule"/>
</dbReference>
<dbReference type="Gene3D" id="1.10.520.20">
    <property type="entry name" value="N-terminal domain of the delta subunit of the F1F0-ATP synthase"/>
    <property type="match status" value="1"/>
</dbReference>
<dbReference type="HAMAP" id="MF_01416">
    <property type="entry name" value="ATP_synth_delta_bact"/>
    <property type="match status" value="1"/>
</dbReference>
<dbReference type="InterPro" id="IPR026015">
    <property type="entry name" value="ATP_synth_OSCP/delta_N_sf"/>
</dbReference>
<dbReference type="InterPro" id="IPR020781">
    <property type="entry name" value="ATPase_OSCP/d_CS"/>
</dbReference>
<dbReference type="InterPro" id="IPR000711">
    <property type="entry name" value="ATPase_OSCP/dsu"/>
</dbReference>
<dbReference type="NCBIfam" id="TIGR01145">
    <property type="entry name" value="ATP_synt_delta"/>
    <property type="match status" value="1"/>
</dbReference>
<dbReference type="NCBIfam" id="NF004403">
    <property type="entry name" value="PRK05758.2-4"/>
    <property type="match status" value="1"/>
</dbReference>
<dbReference type="PANTHER" id="PTHR11910">
    <property type="entry name" value="ATP SYNTHASE DELTA CHAIN"/>
    <property type="match status" value="1"/>
</dbReference>
<dbReference type="Pfam" id="PF00213">
    <property type="entry name" value="OSCP"/>
    <property type="match status" value="1"/>
</dbReference>
<dbReference type="PRINTS" id="PR00125">
    <property type="entry name" value="ATPASEDELTA"/>
</dbReference>
<dbReference type="SUPFAM" id="SSF47928">
    <property type="entry name" value="N-terminal domain of the delta subunit of the F1F0-ATP synthase"/>
    <property type="match status" value="1"/>
</dbReference>
<dbReference type="PROSITE" id="PS00389">
    <property type="entry name" value="ATPASE_DELTA"/>
    <property type="match status" value="1"/>
</dbReference>
<protein>
    <recommendedName>
        <fullName evidence="1">ATP synthase subunit delta</fullName>
    </recommendedName>
    <alternativeName>
        <fullName evidence="1">ATP synthase F(1) sector subunit delta</fullName>
    </alternativeName>
    <alternativeName>
        <fullName evidence="1">F-type ATPase subunit delta</fullName>
        <shortName evidence="1">F-ATPase subunit delta</shortName>
    </alternativeName>
</protein>
<gene>
    <name evidence="1" type="primary">atpH</name>
</gene>
<keyword id="KW-0066">ATP synthesis</keyword>
<keyword id="KW-1003">Cell membrane</keyword>
<keyword id="KW-0139">CF(1)</keyword>
<keyword id="KW-0903">Direct protein sequencing</keyword>
<keyword id="KW-0375">Hydrogen ion transport</keyword>
<keyword id="KW-0406">Ion transport</keyword>
<keyword id="KW-0472">Membrane</keyword>
<keyword id="KW-0813">Transport</keyword>
<reference key="1">
    <citation type="journal article" date="1988" name="Biochim. Biophys. Acta">
        <title>Sequence and over-expression of subunits of adenosine triphosphate synthase in thermophilic bacterium PS3.</title>
        <authorList>
            <person name="Ohta S."/>
            <person name="Yohda M."/>
            <person name="Ishizuka M."/>
            <person name="Hirata H."/>
            <person name="Hamamoto T."/>
            <person name="Otawara-Hamamoto Y."/>
            <person name="Matsuda K."/>
            <person name="Kagawa Y."/>
        </authorList>
    </citation>
    <scope>NUCLEOTIDE SEQUENCE [GENOMIC DNA]</scope>
    <scope>PROTEIN SEQUENCE OF 1-50 AND 60-98</scope>
    <scope>SUBUNIT</scope>
</reference>
<organism>
    <name type="scientific">Bacillus sp. (strain PS3)</name>
    <dbReference type="NCBI Taxonomy" id="2334"/>
    <lineage>
        <taxon>Bacteria</taxon>
        <taxon>Bacillati</taxon>
        <taxon>Bacillota</taxon>
        <taxon>Bacilli</taxon>
        <taxon>Bacillales</taxon>
        <taxon>Bacillaceae</taxon>
        <taxon>Bacillus</taxon>
    </lineage>
</organism>
<proteinExistence type="evidence at protein level"/>
<comment type="function">
    <text evidence="1">F(1)F(0) ATP synthase produces ATP from ADP in the presence of a proton or sodium gradient. F-type ATPases consist of two structural domains, F(1) containing the extramembraneous catalytic core and F(0) containing the membrane proton channel, linked together by a central stalk and a peripheral stalk. During catalysis, ATP synthesis in the catalytic domain of F(1) is coupled via a rotary mechanism of the central stalk subunits to proton translocation.</text>
</comment>
<comment type="function">
    <text evidence="1">This protein is part of the stalk that links CF(0) to CF(1). It either transmits conformational changes from CF(0) to CF(1) or is implicated in proton conduction.</text>
</comment>
<comment type="subunit">
    <text evidence="1 2">F-type ATPases have 2 components, F(1) - the catalytic core - and F(0) - the membrane proton channel. F(1) has five subunits: alpha(3), beta(3), gamma(1), delta(1), epsilon(1). F(0) has three main subunits: a(1), b(2) and c(10-14). The alpha and beta chains form an alternating ring which encloses part of the gamma chain. F(1) is attached to F(0) by a central stalk formed by the gamma and epsilon chains, while a peripheral stalk is formed by the delta and b chains.</text>
</comment>
<comment type="subcellular location">
    <subcellularLocation>
        <location evidence="1">Cell membrane</location>
        <topology evidence="1">Peripheral membrane protein</topology>
    </subcellularLocation>
</comment>
<comment type="similarity">
    <text evidence="1">Belongs to the ATPase delta chain family.</text>
</comment>
<accession>P09220</accession>
<evidence type="ECO:0000255" key="1">
    <source>
        <dbReference type="HAMAP-Rule" id="MF_01416"/>
    </source>
</evidence>
<evidence type="ECO:0000269" key="2">
    <source>
    </source>
</evidence>
<name>ATPD_BACP3</name>